<proteinExistence type="inferred from homology"/>
<reference key="1">
    <citation type="journal article" date="2008" name="J. Bacteriol.">
        <title>The complete genome sequence of Escherichia coli DH10B: insights into the biology of a laboratory workhorse.</title>
        <authorList>
            <person name="Durfee T."/>
            <person name="Nelson R."/>
            <person name="Baldwin S."/>
            <person name="Plunkett G. III"/>
            <person name="Burland V."/>
            <person name="Mau B."/>
            <person name="Petrosino J.F."/>
            <person name="Qin X."/>
            <person name="Muzny D.M."/>
            <person name="Ayele M."/>
            <person name="Gibbs R.A."/>
            <person name="Csorgo B."/>
            <person name="Posfai G."/>
            <person name="Weinstock G.M."/>
            <person name="Blattner F.R."/>
        </authorList>
    </citation>
    <scope>NUCLEOTIDE SEQUENCE [LARGE SCALE GENOMIC DNA]</scope>
    <source>
        <strain>K12 / DH10B</strain>
    </source>
</reference>
<accession>B1XD78</accession>
<gene>
    <name evidence="1" type="primary">rnhA</name>
    <name type="ordered locus">ECDH10B_0195</name>
</gene>
<name>RNH_ECODH</name>
<comment type="function">
    <text evidence="1">Endonuclease that specifically degrades the RNA of RNA-DNA hybrids.</text>
</comment>
<comment type="catalytic activity">
    <reaction evidence="1">
        <text>Endonucleolytic cleavage to 5'-phosphomonoester.</text>
        <dbReference type="EC" id="3.1.26.4"/>
    </reaction>
</comment>
<comment type="cofactor">
    <cofactor evidence="1">
        <name>Mg(2+)</name>
        <dbReference type="ChEBI" id="CHEBI:18420"/>
    </cofactor>
    <text evidence="1">Binds 1 Mg(2+) ion per subunit. May bind a second metal ion at a regulatory site, or after substrate binding.</text>
</comment>
<comment type="subunit">
    <text evidence="1">Monomer.</text>
</comment>
<comment type="subcellular location">
    <subcellularLocation>
        <location evidence="1">Cytoplasm</location>
    </subcellularLocation>
</comment>
<comment type="similarity">
    <text evidence="1">Belongs to the RNase H family.</text>
</comment>
<feature type="chain" id="PRO_1000090899" description="Ribonuclease H">
    <location>
        <begin position="1"/>
        <end position="155"/>
    </location>
</feature>
<feature type="domain" description="RNase H type-1" evidence="2">
    <location>
        <begin position="1"/>
        <end position="142"/>
    </location>
</feature>
<feature type="binding site" evidence="1">
    <location>
        <position position="10"/>
    </location>
    <ligand>
        <name>Mg(2+)</name>
        <dbReference type="ChEBI" id="CHEBI:18420"/>
        <label>1</label>
    </ligand>
</feature>
<feature type="binding site" evidence="1">
    <location>
        <position position="10"/>
    </location>
    <ligand>
        <name>Mg(2+)</name>
        <dbReference type="ChEBI" id="CHEBI:18420"/>
        <label>2</label>
    </ligand>
</feature>
<feature type="binding site" evidence="1">
    <location>
        <position position="48"/>
    </location>
    <ligand>
        <name>Mg(2+)</name>
        <dbReference type="ChEBI" id="CHEBI:18420"/>
        <label>1</label>
    </ligand>
</feature>
<feature type="binding site" evidence="1">
    <location>
        <position position="70"/>
    </location>
    <ligand>
        <name>Mg(2+)</name>
        <dbReference type="ChEBI" id="CHEBI:18420"/>
        <label>1</label>
    </ligand>
</feature>
<feature type="binding site" evidence="1">
    <location>
        <position position="134"/>
    </location>
    <ligand>
        <name>Mg(2+)</name>
        <dbReference type="ChEBI" id="CHEBI:18420"/>
        <label>2</label>
    </ligand>
</feature>
<dbReference type="EC" id="3.1.26.4" evidence="1"/>
<dbReference type="EMBL" id="CP000948">
    <property type="protein sequence ID" value="ACB01387.1"/>
    <property type="molecule type" value="Genomic_DNA"/>
</dbReference>
<dbReference type="RefSeq" id="WP_000917883.1">
    <property type="nucleotide sequence ID" value="NC_010473.1"/>
</dbReference>
<dbReference type="BMRB" id="B1XD78"/>
<dbReference type="SMR" id="B1XD78"/>
<dbReference type="GeneID" id="93777209"/>
<dbReference type="KEGG" id="ecd:ECDH10B_0195"/>
<dbReference type="HOGENOM" id="CLU_030894_6_0_6"/>
<dbReference type="GO" id="GO:0005737">
    <property type="term" value="C:cytoplasm"/>
    <property type="evidence" value="ECO:0007669"/>
    <property type="project" value="UniProtKB-SubCell"/>
</dbReference>
<dbReference type="GO" id="GO:0000287">
    <property type="term" value="F:magnesium ion binding"/>
    <property type="evidence" value="ECO:0007669"/>
    <property type="project" value="UniProtKB-UniRule"/>
</dbReference>
<dbReference type="GO" id="GO:0003676">
    <property type="term" value="F:nucleic acid binding"/>
    <property type="evidence" value="ECO:0007669"/>
    <property type="project" value="InterPro"/>
</dbReference>
<dbReference type="GO" id="GO:0004523">
    <property type="term" value="F:RNA-DNA hybrid ribonuclease activity"/>
    <property type="evidence" value="ECO:0007669"/>
    <property type="project" value="UniProtKB-UniRule"/>
</dbReference>
<dbReference type="GO" id="GO:0043137">
    <property type="term" value="P:DNA replication, removal of RNA primer"/>
    <property type="evidence" value="ECO:0007669"/>
    <property type="project" value="TreeGrafter"/>
</dbReference>
<dbReference type="CDD" id="cd09278">
    <property type="entry name" value="RNase_HI_prokaryote_like"/>
    <property type="match status" value="1"/>
</dbReference>
<dbReference type="FunFam" id="3.30.420.10:FF:000008">
    <property type="entry name" value="Ribonuclease H"/>
    <property type="match status" value="1"/>
</dbReference>
<dbReference type="Gene3D" id="3.30.420.10">
    <property type="entry name" value="Ribonuclease H-like superfamily/Ribonuclease H"/>
    <property type="match status" value="1"/>
</dbReference>
<dbReference type="HAMAP" id="MF_00042">
    <property type="entry name" value="RNase_H"/>
    <property type="match status" value="1"/>
</dbReference>
<dbReference type="InterPro" id="IPR050092">
    <property type="entry name" value="RNase_H"/>
</dbReference>
<dbReference type="InterPro" id="IPR012337">
    <property type="entry name" value="RNaseH-like_sf"/>
</dbReference>
<dbReference type="InterPro" id="IPR002156">
    <property type="entry name" value="RNaseH_domain"/>
</dbReference>
<dbReference type="InterPro" id="IPR036397">
    <property type="entry name" value="RNaseH_sf"/>
</dbReference>
<dbReference type="InterPro" id="IPR022892">
    <property type="entry name" value="RNaseHI"/>
</dbReference>
<dbReference type="NCBIfam" id="NF001236">
    <property type="entry name" value="PRK00203.1"/>
    <property type="match status" value="1"/>
</dbReference>
<dbReference type="PANTHER" id="PTHR10642">
    <property type="entry name" value="RIBONUCLEASE H1"/>
    <property type="match status" value="1"/>
</dbReference>
<dbReference type="PANTHER" id="PTHR10642:SF26">
    <property type="entry name" value="RIBONUCLEASE H1"/>
    <property type="match status" value="1"/>
</dbReference>
<dbReference type="Pfam" id="PF00075">
    <property type="entry name" value="RNase_H"/>
    <property type="match status" value="1"/>
</dbReference>
<dbReference type="SUPFAM" id="SSF53098">
    <property type="entry name" value="Ribonuclease H-like"/>
    <property type="match status" value="1"/>
</dbReference>
<dbReference type="PROSITE" id="PS50879">
    <property type="entry name" value="RNASE_H_1"/>
    <property type="match status" value="1"/>
</dbReference>
<sequence>MLKQVEIFTDGSCLGNPGPGGYGAILRYRGREKTFSAGYTRTTNNRMELMAAIVALEALKEHCEVILSTDSQYVRQGITQWIHNWKKRGWKTADKKPVKNVDLWQRLDAALGQHQIKWEWVKGHAGHPENERCDELARAAAMNPTLEDTGYQVEV</sequence>
<organism>
    <name type="scientific">Escherichia coli (strain K12 / DH10B)</name>
    <dbReference type="NCBI Taxonomy" id="316385"/>
    <lineage>
        <taxon>Bacteria</taxon>
        <taxon>Pseudomonadati</taxon>
        <taxon>Pseudomonadota</taxon>
        <taxon>Gammaproteobacteria</taxon>
        <taxon>Enterobacterales</taxon>
        <taxon>Enterobacteriaceae</taxon>
        <taxon>Escherichia</taxon>
    </lineage>
</organism>
<evidence type="ECO:0000255" key="1">
    <source>
        <dbReference type="HAMAP-Rule" id="MF_00042"/>
    </source>
</evidence>
<evidence type="ECO:0000255" key="2">
    <source>
        <dbReference type="PROSITE-ProRule" id="PRU00408"/>
    </source>
</evidence>
<keyword id="KW-0963">Cytoplasm</keyword>
<keyword id="KW-0255">Endonuclease</keyword>
<keyword id="KW-0378">Hydrolase</keyword>
<keyword id="KW-0460">Magnesium</keyword>
<keyword id="KW-0479">Metal-binding</keyword>
<keyword id="KW-0540">Nuclease</keyword>
<protein>
    <recommendedName>
        <fullName evidence="1">Ribonuclease H</fullName>
        <shortName evidence="1">RNase H</shortName>
        <ecNumber evidence="1">3.1.26.4</ecNumber>
    </recommendedName>
</protein>